<sequence>FLVMFLSG</sequence>
<accession>P13269</accession>
<protein>
    <recommendedName>
        <fullName>Sex pheromone cPD1</fullName>
    </recommendedName>
</protein>
<feature type="peptide" id="PRO_0000044128" description="Sex pheromone cPD1">
    <location>
        <begin position="1"/>
        <end position="8"/>
    </location>
</feature>
<dbReference type="GO" id="GO:0005186">
    <property type="term" value="F:pheromone activity"/>
    <property type="evidence" value="ECO:0007669"/>
    <property type="project" value="UniProtKB-KW"/>
</dbReference>
<organism>
    <name type="scientific">Enterococcus faecalis</name>
    <name type="common">Streptococcus faecalis</name>
    <dbReference type="NCBI Taxonomy" id="1351"/>
    <lineage>
        <taxon>Bacteria</taxon>
        <taxon>Bacillati</taxon>
        <taxon>Bacillota</taxon>
        <taxon>Bacilli</taxon>
        <taxon>Lactobacillales</taxon>
        <taxon>Enterococcaceae</taxon>
        <taxon>Enterococcus</taxon>
    </lineage>
</organism>
<name>CPD1_ENTFL</name>
<keyword id="KW-0903">Direct protein sequencing</keyword>
<keyword id="KW-0588">Pheromone</keyword>
<reference key="1">
    <citation type="journal article" date="1984" name="Science">
        <title>Isolation and structure of bacterial sex pheromone, cPD1.</title>
        <authorList>
            <person name="Suzuki A."/>
            <person name="Mori M."/>
            <person name="Sagakami Y."/>
            <person name="Isogai A."/>
            <person name="Fujino M."/>
            <person name="Kitada C."/>
            <person name="Craig R.A."/>
            <person name="Clewell D.B."/>
        </authorList>
    </citation>
    <scope>PROTEIN SEQUENCE</scope>
</reference>
<comment type="function">
    <text>cPD1 is involved in the conjugative transfer of the bacteriocin plasmid pPD1.</text>
</comment>
<proteinExistence type="evidence at protein level"/>